<reference key="1">
    <citation type="journal article" date="2009" name="Vaccine">
        <title>Whole genome sequence analysis of Mycobacterium bovis bacillus Calmette-Guerin (BCG) Tokyo 172: a comparative study of BCG vaccine substrains.</title>
        <authorList>
            <person name="Seki M."/>
            <person name="Honda I."/>
            <person name="Fujita I."/>
            <person name="Yano I."/>
            <person name="Yamamoto S."/>
            <person name="Koyama A."/>
        </authorList>
    </citation>
    <scope>NUCLEOTIDE SEQUENCE [LARGE SCALE GENOMIC DNA]</scope>
    <source>
        <strain>BCG / Tokyo 172 / ATCC 35737 / TMC 1019</strain>
    </source>
</reference>
<dbReference type="EC" id="2.2.1.7" evidence="1"/>
<dbReference type="EMBL" id="AP010918">
    <property type="protein sequence ID" value="BAH26970.1"/>
    <property type="molecule type" value="Genomic_DNA"/>
</dbReference>
<dbReference type="RefSeq" id="WP_003413891.1">
    <property type="nucleotide sequence ID" value="NZ_CP014566.1"/>
</dbReference>
<dbReference type="SMR" id="C1AFE1"/>
<dbReference type="KEGG" id="mbt:JTY_2689"/>
<dbReference type="HOGENOM" id="CLU_009227_1_4_11"/>
<dbReference type="UniPathway" id="UPA00064">
    <property type="reaction ID" value="UER00091"/>
</dbReference>
<dbReference type="GO" id="GO:0005829">
    <property type="term" value="C:cytosol"/>
    <property type="evidence" value="ECO:0007669"/>
    <property type="project" value="TreeGrafter"/>
</dbReference>
<dbReference type="GO" id="GO:0008661">
    <property type="term" value="F:1-deoxy-D-xylulose-5-phosphate synthase activity"/>
    <property type="evidence" value="ECO:0007669"/>
    <property type="project" value="UniProtKB-UniRule"/>
</dbReference>
<dbReference type="GO" id="GO:0000287">
    <property type="term" value="F:magnesium ion binding"/>
    <property type="evidence" value="ECO:0007669"/>
    <property type="project" value="UniProtKB-UniRule"/>
</dbReference>
<dbReference type="GO" id="GO:0030976">
    <property type="term" value="F:thiamine pyrophosphate binding"/>
    <property type="evidence" value="ECO:0007669"/>
    <property type="project" value="UniProtKB-UniRule"/>
</dbReference>
<dbReference type="GO" id="GO:0052865">
    <property type="term" value="P:1-deoxy-D-xylulose 5-phosphate biosynthetic process"/>
    <property type="evidence" value="ECO:0007669"/>
    <property type="project" value="UniProtKB-UniPathway"/>
</dbReference>
<dbReference type="GO" id="GO:0019288">
    <property type="term" value="P:isopentenyl diphosphate biosynthetic process, methylerythritol 4-phosphate pathway"/>
    <property type="evidence" value="ECO:0007669"/>
    <property type="project" value="TreeGrafter"/>
</dbReference>
<dbReference type="GO" id="GO:0016114">
    <property type="term" value="P:terpenoid biosynthetic process"/>
    <property type="evidence" value="ECO:0007669"/>
    <property type="project" value="UniProtKB-UniRule"/>
</dbReference>
<dbReference type="GO" id="GO:0009228">
    <property type="term" value="P:thiamine biosynthetic process"/>
    <property type="evidence" value="ECO:0007669"/>
    <property type="project" value="UniProtKB-UniRule"/>
</dbReference>
<dbReference type="CDD" id="cd02007">
    <property type="entry name" value="TPP_DXS"/>
    <property type="match status" value="1"/>
</dbReference>
<dbReference type="CDD" id="cd07033">
    <property type="entry name" value="TPP_PYR_DXS_TK_like"/>
    <property type="match status" value="1"/>
</dbReference>
<dbReference type="FunFam" id="3.40.50.920:FF:000002">
    <property type="entry name" value="1-deoxy-D-xylulose-5-phosphate synthase"/>
    <property type="match status" value="1"/>
</dbReference>
<dbReference type="FunFam" id="3.40.50.970:FF:000005">
    <property type="entry name" value="1-deoxy-D-xylulose-5-phosphate synthase"/>
    <property type="match status" value="1"/>
</dbReference>
<dbReference type="Gene3D" id="3.40.50.920">
    <property type="match status" value="1"/>
</dbReference>
<dbReference type="Gene3D" id="3.40.50.970">
    <property type="match status" value="2"/>
</dbReference>
<dbReference type="HAMAP" id="MF_00315">
    <property type="entry name" value="DXP_synth"/>
    <property type="match status" value="1"/>
</dbReference>
<dbReference type="InterPro" id="IPR005477">
    <property type="entry name" value="Dxylulose-5-P_synthase"/>
</dbReference>
<dbReference type="InterPro" id="IPR029061">
    <property type="entry name" value="THDP-binding"/>
</dbReference>
<dbReference type="InterPro" id="IPR009014">
    <property type="entry name" value="Transketo_C/PFOR_II"/>
</dbReference>
<dbReference type="InterPro" id="IPR005475">
    <property type="entry name" value="Transketolase-like_Pyr-bd"/>
</dbReference>
<dbReference type="InterPro" id="IPR020826">
    <property type="entry name" value="Transketolase_BS"/>
</dbReference>
<dbReference type="InterPro" id="IPR033248">
    <property type="entry name" value="Transketolase_C"/>
</dbReference>
<dbReference type="InterPro" id="IPR049557">
    <property type="entry name" value="Transketolase_CS"/>
</dbReference>
<dbReference type="NCBIfam" id="TIGR00204">
    <property type="entry name" value="dxs"/>
    <property type="match status" value="1"/>
</dbReference>
<dbReference type="NCBIfam" id="NF003933">
    <property type="entry name" value="PRK05444.2-2"/>
    <property type="match status" value="1"/>
</dbReference>
<dbReference type="PANTHER" id="PTHR43322">
    <property type="entry name" value="1-D-DEOXYXYLULOSE 5-PHOSPHATE SYNTHASE-RELATED"/>
    <property type="match status" value="1"/>
</dbReference>
<dbReference type="PANTHER" id="PTHR43322:SF5">
    <property type="entry name" value="1-DEOXY-D-XYLULOSE-5-PHOSPHATE SYNTHASE, CHLOROPLASTIC"/>
    <property type="match status" value="1"/>
</dbReference>
<dbReference type="Pfam" id="PF13292">
    <property type="entry name" value="DXP_synthase_N"/>
    <property type="match status" value="1"/>
</dbReference>
<dbReference type="Pfam" id="PF02779">
    <property type="entry name" value="Transket_pyr"/>
    <property type="match status" value="1"/>
</dbReference>
<dbReference type="Pfam" id="PF02780">
    <property type="entry name" value="Transketolase_C"/>
    <property type="match status" value="1"/>
</dbReference>
<dbReference type="SMART" id="SM00861">
    <property type="entry name" value="Transket_pyr"/>
    <property type="match status" value="1"/>
</dbReference>
<dbReference type="SUPFAM" id="SSF52518">
    <property type="entry name" value="Thiamin diphosphate-binding fold (THDP-binding)"/>
    <property type="match status" value="2"/>
</dbReference>
<dbReference type="SUPFAM" id="SSF52922">
    <property type="entry name" value="TK C-terminal domain-like"/>
    <property type="match status" value="1"/>
</dbReference>
<dbReference type="PROSITE" id="PS00801">
    <property type="entry name" value="TRANSKETOLASE_1"/>
    <property type="match status" value="1"/>
</dbReference>
<dbReference type="PROSITE" id="PS00802">
    <property type="entry name" value="TRANSKETOLASE_2"/>
    <property type="match status" value="1"/>
</dbReference>
<evidence type="ECO:0000255" key="1">
    <source>
        <dbReference type="HAMAP-Rule" id="MF_00315"/>
    </source>
</evidence>
<sequence>MLQQIRGPADLQHLSQAQLRELAAEIREFLIHKVAATGGHLGPNLGVVELTLALHRVFDSPHDPIIFDTGHQAYVHKMLTGRSQDFATLRKKGGLSGYPSRAESEHDWVESSHASAALSYADGLAKAFELTGHRNRHVVAVVGDGALTGGMCWEALNNIAASRRPVIIVVNDNGRSYAPTIGGVADHLATLRLQPAYEQALETGRDLVRAVPLVGGLWFRFLHSVKAGIKDSLSPQLLFTDLGLKYVGPVDGHDERAVEVALRSARRFGAPVIVHVVTRKGMGYPPAEADQAEQMHSTVPIDPATGQATKVAGPGWTATFSDALIGYAQKRRDIVAITAAMPGPTGLTAFGQRFPDRLFDVGIAEQHAMTSAAGLAMGGLHPVVAIYSTFLNRAFDQIMMDVALHKLPVTMVLDRAGITGSDGASHNGMWDLSMLGIVPGIRVAAPRDATRLREELGEALDVDDGPTALRFPKGDVGEDISALERRGGVDVLAAPADGLNHDVLLVAIGAFAPMALAVAKRLHNQGIGVTVIDPRWVLPVSDGVRELAVQHKLLVTLEDNGVNGGAGSAVSAALRRAEIDVPCRDVGLPQEFYEHASRSEVLADLGLTDQDVARRITGWVAALGTGVCASDAIPEHLD</sequence>
<gene>
    <name evidence="1" type="primary">dxs</name>
    <name type="ordered locus">JTY_2689</name>
</gene>
<feature type="chain" id="PRO_1000132940" description="1-deoxy-D-xylulose-5-phosphate synthase">
    <location>
        <begin position="1"/>
        <end position="638"/>
    </location>
</feature>
<feature type="binding site" evidence="1">
    <location>
        <position position="71"/>
    </location>
    <ligand>
        <name>thiamine diphosphate</name>
        <dbReference type="ChEBI" id="CHEBI:58937"/>
    </ligand>
</feature>
<feature type="binding site" evidence="1">
    <location>
        <begin position="112"/>
        <end position="114"/>
    </location>
    <ligand>
        <name>thiamine diphosphate</name>
        <dbReference type="ChEBI" id="CHEBI:58937"/>
    </ligand>
</feature>
<feature type="binding site" evidence="1">
    <location>
        <position position="144"/>
    </location>
    <ligand>
        <name>Mg(2+)</name>
        <dbReference type="ChEBI" id="CHEBI:18420"/>
    </ligand>
</feature>
<feature type="binding site" evidence="1">
    <location>
        <begin position="145"/>
        <end position="146"/>
    </location>
    <ligand>
        <name>thiamine diphosphate</name>
        <dbReference type="ChEBI" id="CHEBI:58937"/>
    </ligand>
</feature>
<feature type="binding site" evidence="1">
    <location>
        <position position="173"/>
    </location>
    <ligand>
        <name>Mg(2+)</name>
        <dbReference type="ChEBI" id="CHEBI:18420"/>
    </ligand>
</feature>
<feature type="binding site" evidence="1">
    <location>
        <position position="173"/>
    </location>
    <ligand>
        <name>thiamine diphosphate</name>
        <dbReference type="ChEBI" id="CHEBI:58937"/>
    </ligand>
</feature>
<feature type="binding site" evidence="1">
    <location>
        <position position="284"/>
    </location>
    <ligand>
        <name>thiamine diphosphate</name>
        <dbReference type="ChEBI" id="CHEBI:58937"/>
    </ligand>
</feature>
<feature type="binding site" evidence="1">
    <location>
        <position position="365"/>
    </location>
    <ligand>
        <name>thiamine diphosphate</name>
        <dbReference type="ChEBI" id="CHEBI:58937"/>
    </ligand>
</feature>
<organism>
    <name type="scientific">Mycobacterium bovis (strain BCG / Tokyo 172 / ATCC 35737 / TMC 1019)</name>
    <dbReference type="NCBI Taxonomy" id="561275"/>
    <lineage>
        <taxon>Bacteria</taxon>
        <taxon>Bacillati</taxon>
        <taxon>Actinomycetota</taxon>
        <taxon>Actinomycetes</taxon>
        <taxon>Mycobacteriales</taxon>
        <taxon>Mycobacteriaceae</taxon>
        <taxon>Mycobacterium</taxon>
        <taxon>Mycobacterium tuberculosis complex</taxon>
    </lineage>
</organism>
<protein>
    <recommendedName>
        <fullName evidence="1">1-deoxy-D-xylulose-5-phosphate synthase</fullName>
        <ecNumber evidence="1">2.2.1.7</ecNumber>
    </recommendedName>
    <alternativeName>
        <fullName evidence="1">1-deoxyxylulose-5-phosphate synthase</fullName>
        <shortName evidence="1">DXP synthase</shortName>
        <shortName evidence="1">DXPS</shortName>
    </alternativeName>
</protein>
<comment type="function">
    <text evidence="1">Catalyzes the acyloin condensation reaction between C atoms 2 and 3 of pyruvate and glyceraldehyde 3-phosphate to yield 1-deoxy-D-xylulose-5-phosphate (DXP).</text>
</comment>
<comment type="catalytic activity">
    <reaction evidence="1">
        <text>D-glyceraldehyde 3-phosphate + pyruvate + H(+) = 1-deoxy-D-xylulose 5-phosphate + CO2</text>
        <dbReference type="Rhea" id="RHEA:12605"/>
        <dbReference type="ChEBI" id="CHEBI:15361"/>
        <dbReference type="ChEBI" id="CHEBI:15378"/>
        <dbReference type="ChEBI" id="CHEBI:16526"/>
        <dbReference type="ChEBI" id="CHEBI:57792"/>
        <dbReference type="ChEBI" id="CHEBI:59776"/>
        <dbReference type="EC" id="2.2.1.7"/>
    </reaction>
</comment>
<comment type="cofactor">
    <cofactor evidence="1">
        <name>Mg(2+)</name>
        <dbReference type="ChEBI" id="CHEBI:18420"/>
    </cofactor>
    <text evidence="1">Binds 1 Mg(2+) ion per subunit.</text>
</comment>
<comment type="cofactor">
    <cofactor evidence="1">
        <name>thiamine diphosphate</name>
        <dbReference type="ChEBI" id="CHEBI:58937"/>
    </cofactor>
    <text evidence="1">Binds 1 thiamine pyrophosphate per subunit.</text>
</comment>
<comment type="pathway">
    <text evidence="1">Metabolic intermediate biosynthesis; 1-deoxy-D-xylulose 5-phosphate biosynthesis; 1-deoxy-D-xylulose 5-phosphate from D-glyceraldehyde 3-phosphate and pyruvate: step 1/1.</text>
</comment>
<comment type="subunit">
    <text evidence="1">Homodimer.</text>
</comment>
<comment type="similarity">
    <text evidence="1">Belongs to the transketolase family. DXPS subfamily.</text>
</comment>
<name>DXS_MYCBT</name>
<proteinExistence type="inferred from homology"/>
<accession>C1AFE1</accession>
<keyword id="KW-0414">Isoprene biosynthesis</keyword>
<keyword id="KW-0460">Magnesium</keyword>
<keyword id="KW-0479">Metal-binding</keyword>
<keyword id="KW-0784">Thiamine biosynthesis</keyword>
<keyword id="KW-0786">Thiamine pyrophosphate</keyword>
<keyword id="KW-0808">Transferase</keyword>